<gene>
    <name type="primary">rgs9bp</name>
    <name type="ORF">zgc:109913</name>
</gene>
<accession>Q504F3</accession>
<name>R9BP_DANRE</name>
<reference key="1">
    <citation type="submission" date="2005-05" db="EMBL/GenBank/DDBJ databases">
        <authorList>
            <consortium name="NIH - Zebrafish Gene Collection (ZGC) project"/>
        </authorList>
    </citation>
    <scope>NUCLEOTIDE SEQUENCE [LARGE SCALE MRNA]</scope>
    <source>
        <tissue>Olfactory epithelium</tissue>
    </source>
</reference>
<evidence type="ECO:0000255" key="1"/>
<evidence type="ECO:0000305" key="2"/>
<feature type="chain" id="PRO_0000287589" description="Regulator of G-protein signaling 9-binding protein">
    <location>
        <begin position="1"/>
        <end position="245"/>
    </location>
</feature>
<feature type="coiled-coil region" evidence="1">
    <location>
        <begin position="71"/>
        <end position="92"/>
    </location>
</feature>
<organism>
    <name type="scientific">Danio rerio</name>
    <name type="common">Zebrafish</name>
    <name type="synonym">Brachydanio rerio</name>
    <dbReference type="NCBI Taxonomy" id="7955"/>
    <lineage>
        <taxon>Eukaryota</taxon>
        <taxon>Metazoa</taxon>
        <taxon>Chordata</taxon>
        <taxon>Craniata</taxon>
        <taxon>Vertebrata</taxon>
        <taxon>Euteleostomi</taxon>
        <taxon>Actinopterygii</taxon>
        <taxon>Neopterygii</taxon>
        <taxon>Teleostei</taxon>
        <taxon>Ostariophysi</taxon>
        <taxon>Cypriniformes</taxon>
        <taxon>Danionidae</taxon>
        <taxon>Danioninae</taxon>
        <taxon>Danio</taxon>
    </lineage>
</organism>
<proteinExistence type="evidence at transcript level"/>
<protein>
    <recommendedName>
        <fullName>Regulator of G-protein signaling 9-binding protein</fullName>
    </recommendedName>
    <alternativeName>
        <fullName>RGS9-anchoring protein</fullName>
    </alternativeName>
</protein>
<keyword id="KW-0175">Coiled coil</keyword>
<keyword id="KW-1185">Reference proteome</keyword>
<keyword id="KW-0734">Signal transduction inhibitor</keyword>
<comment type="function">
    <text>Regulator of G protein-coupled receptor (GPCR) signaling. Probably acts by regulating the activity of some 'R7' family protein (RGS6, RGS7, RGS9 and/or RGS11).</text>
</comment>
<comment type="similarity">
    <text evidence="2">Belongs to the RGS7BP/RGS9BP family.</text>
</comment>
<dbReference type="EMBL" id="BC095048">
    <property type="protein sequence ID" value="AAH95048.1"/>
    <property type="molecule type" value="mRNA"/>
</dbReference>
<dbReference type="RefSeq" id="NP_001018364.1">
    <property type="nucleotide sequence ID" value="NM_001020528.1"/>
</dbReference>
<dbReference type="SMR" id="Q504F3"/>
<dbReference type="FunCoup" id="Q504F3">
    <property type="interactions" value="12"/>
</dbReference>
<dbReference type="PaxDb" id="7955-ENSDARP00000033310"/>
<dbReference type="GeneID" id="553549"/>
<dbReference type="KEGG" id="dre:553549"/>
<dbReference type="AGR" id="ZFIN:ZDB-GENE-050522-72"/>
<dbReference type="ZFIN" id="ZDB-GENE-050522-72">
    <property type="gene designation" value="zgc:109913"/>
</dbReference>
<dbReference type="eggNOG" id="ENOG502RXQ0">
    <property type="taxonomic scope" value="Eukaryota"/>
</dbReference>
<dbReference type="InParanoid" id="Q504F3"/>
<dbReference type="OrthoDB" id="8062037at2759"/>
<dbReference type="PhylomeDB" id="Q504F3"/>
<dbReference type="PRO" id="PR:Q504F3"/>
<dbReference type="Proteomes" id="UP000000437">
    <property type="component" value="Chromosome 6"/>
</dbReference>
<dbReference type="GO" id="GO:0043005">
    <property type="term" value="C:neuron projection"/>
    <property type="evidence" value="ECO:0000318"/>
    <property type="project" value="GO_Central"/>
</dbReference>
<dbReference type="GO" id="GO:0007186">
    <property type="term" value="P:G protein-coupled receptor signaling pathway"/>
    <property type="evidence" value="ECO:0000318"/>
    <property type="project" value="GO_Central"/>
</dbReference>
<dbReference type="GO" id="GO:0009968">
    <property type="term" value="P:negative regulation of signal transduction"/>
    <property type="evidence" value="ECO:0007669"/>
    <property type="project" value="UniProtKB-KW"/>
</dbReference>
<dbReference type="InterPro" id="IPR026512">
    <property type="entry name" value="RGS7BP/RGS9BP"/>
</dbReference>
<dbReference type="PANTHER" id="PTHR21029">
    <property type="entry name" value="R-SEVEN BINDING PROTEIN (R7BP) HOMOLOG"/>
    <property type="match status" value="1"/>
</dbReference>
<sequence length="245" mass="27721">MNRWQRSVVEIQTRKRQVNECERAQVALSKVTACFQQMSTSLGSNVDGSFLREEMEETRTVAHKICSGLHRRLLSLLMEIDQGQEDKEQVERLWVIFLSSLENFQQDLKKVKVLQEIFPLTQRKDRQALVITGLAGGTSEVAARAAMVQTPWLSVEVTVSPDLKTHIEEIDVLLEEMLQRVNVPLWSVEPTQEAWVEGSSTPGVGQEEDESLEEMMEVEVVSQNKTSGCCHHHNCKVGCLLCLLS</sequence>